<proteinExistence type="evidence at protein level"/>
<evidence type="ECO:0000250" key="1"/>
<evidence type="ECO:0000250" key="2">
    <source>
        <dbReference type="UniProtKB" id="P0C774"/>
    </source>
</evidence>
<evidence type="ECO:0000250" key="3">
    <source>
        <dbReference type="UniProtKB" id="P11207"/>
    </source>
</evidence>
<evidence type="ECO:0000250" key="4">
    <source>
        <dbReference type="UniProtKB" id="Q77M19"/>
    </source>
</evidence>
<evidence type="ECO:0000256" key="5">
    <source>
        <dbReference type="SAM" id="MobiDB-lite"/>
    </source>
</evidence>
<evidence type="ECO:0000269" key="6">
    <source>
    </source>
</evidence>
<evidence type="ECO:0000269" key="7">
    <source>
    </source>
</evidence>
<evidence type="ECO:0000305" key="8"/>
<gene>
    <name type="primary">P/V</name>
</gene>
<feature type="chain" id="PRO_0000142810" description="Non-structural protein V">
    <location>
        <begin position="1"/>
        <end position="299"/>
    </location>
</feature>
<feature type="region of interest" description="Disordered" evidence="5">
    <location>
        <begin position="41"/>
        <end position="99"/>
    </location>
</feature>
<feature type="region of interest" description="Interaction with host STAT1" evidence="2">
    <location>
        <begin position="110"/>
        <end position="120"/>
    </location>
</feature>
<feature type="region of interest" description="Disordered" evidence="5">
    <location>
        <begin position="134"/>
        <end position="168"/>
    </location>
</feature>
<feature type="compositionally biased region" description="Low complexity" evidence="5">
    <location>
        <begin position="134"/>
        <end position="145"/>
    </location>
</feature>
<feature type="compositionally biased region" description="Acidic residues" evidence="5">
    <location>
        <begin position="146"/>
        <end position="160"/>
    </location>
</feature>
<feature type="binding site" evidence="3">
    <location>
        <position position="232"/>
    </location>
    <ligand>
        <name>Zn(2+)</name>
        <dbReference type="ChEBI" id="CHEBI:29105"/>
        <label>1</label>
    </ligand>
</feature>
<feature type="binding site" evidence="3">
    <location>
        <position position="251"/>
    </location>
    <ligand>
        <name>Zn(2+)</name>
        <dbReference type="ChEBI" id="CHEBI:29105"/>
        <label>1</label>
    </ligand>
</feature>
<feature type="binding site" evidence="3">
    <location>
        <position position="255"/>
    </location>
    <ligand>
        <name>Zn(2+)</name>
        <dbReference type="ChEBI" id="CHEBI:29105"/>
        <label>2</label>
    </ligand>
</feature>
<feature type="binding site" evidence="3">
    <location>
        <position position="267"/>
    </location>
    <ligand>
        <name>Zn(2+)</name>
        <dbReference type="ChEBI" id="CHEBI:29105"/>
        <label>2</label>
    </ligand>
</feature>
<feature type="binding site" evidence="3">
    <location>
        <position position="269"/>
    </location>
    <ligand>
        <name>Zn(2+)</name>
        <dbReference type="ChEBI" id="CHEBI:29105"/>
        <label>2</label>
    </ligand>
</feature>
<feature type="binding site" evidence="3">
    <location>
        <position position="272"/>
    </location>
    <ligand>
        <name>Zn(2+)</name>
        <dbReference type="ChEBI" id="CHEBI:29105"/>
        <label>2</label>
    </ligand>
</feature>
<feature type="binding site" evidence="3">
    <location>
        <position position="276"/>
    </location>
    <ligand>
        <name>Zn(2+)</name>
        <dbReference type="ChEBI" id="CHEBI:29105"/>
        <label>1</label>
    </ligand>
</feature>
<feature type="binding site" evidence="3">
    <location>
        <position position="279"/>
    </location>
    <ligand>
        <name>Zn(2+)</name>
        <dbReference type="ChEBI" id="CHEBI:29105"/>
        <label>1</label>
    </ligand>
</feature>
<feature type="site" description="Interaction with host STAT2" evidence="2">
    <location>
        <position position="240"/>
    </location>
</feature>
<feature type="site" description="Interaction with host STAT2" evidence="2">
    <location>
        <position position="246"/>
    </location>
</feature>
<feature type="site" description="Interaction with host STAT2" evidence="2">
    <location>
        <position position="248"/>
    </location>
</feature>
<feature type="site" description="Interaction with host STAT2" evidence="2">
    <location>
        <position position="250"/>
    </location>
</feature>
<comment type="function">
    <text evidence="2 7">Plays an essential role in the inhibition of host immune response. Prevents the establishment of cellular antiviral state by blocking interferon-alpha/beta (IFN-alpha/beta) production and signaling pathway. Interacts with host IFIH1/MDA5 and DHX58/LGP2 to inhibit the transduction pathway involved in the activation of IFN-beta promoter, thus protecting the virus against cell antiviral state. Blocks the type I interferon signaling pathway by interacting with host TYK2 and thereby inhibiting downstream STAT1 and STAT2 phosphorylation (By similarity). Blocks the type I interferon signaling pathway by disrupting the RIG-I signaling pathway (PubMed:29321315). Moderately affects the type II interferon signaling. Prevents PP1alpha/gamma-mediated dephosphorylation of host IFIH1/MDA5 and thus blocks its activation (By similarity).</text>
</comment>
<comment type="subunit">
    <text evidence="2 4 7">Interacts with host IFIH1/MDA5 and DHX58/LGP2; these interactions are involved in the inhibition of the host type I interferon signaling pathway. Interacts with host TYK2; this interaction inhibits the type I interferon signaling pathway without affecting the type II pathway. Interacts with host IRF7; this interaction inhibits IRF7 translocation to the nucleus. Interacts with host CHUK (By similarity). Interacts with host RELA/p65; this interaction inhibits the nuclear translocation of NF-KappaB (By similarity). Interacts (via N-terminus) with host STAT1 and JAK1; these interactions inhibit STAT1 phosphorylation by Jak1 and thereby the type I interferon signaling pathway. Interacts (via C-terminus) with host STAT2; this interaction is involved in the inhibition of the host type I interferon signaling pathway. Forms a complex with host PPP1CA and PPP1CC; this interaction prevents dephosphorylation of host IFIH1/MDA5 and leads to the inhibition of the host type I interferon signaling pathway. Interacts with host IRF9; this interaction prevents the binding of IRF9 to STAT2 and thereby the type I interferon signaling pathway (By similarity). Interacts with host RIGI regulatory protein (via CARDs domain) and host TRIM25 (via SPRY domain); these interactions prevent TRIM25-mediated ubiquitination of RIG-I and disrupts downstream RIG-I signaling (PubMed:29321315).</text>
</comment>
<comment type="interaction">
    <interactant intactId="EBI-6598728">
        <id>Q9EMA9</id>
    </interactant>
    <interactant intactId="EBI-744193">
        <id>Q96C10</id>
        <label>DHX58</label>
    </interactant>
    <organismsDiffer>true</organismsDiffer>
    <experiments>2</experiments>
</comment>
<comment type="interaction">
    <interactant intactId="EBI-6598728">
        <id>Q9EMA9</id>
    </interactant>
    <interactant intactId="EBI-6115771">
        <id>Q9BYX4</id>
        <label>IFIH1</label>
    </interactant>
    <organismsDiffer>true</organismsDiffer>
    <experiments>2</experiments>
</comment>
<comment type="subcellular location">
    <subcellularLocation>
        <location evidence="1">Host cytoplasm</location>
    </subcellularLocation>
</comment>
<comment type="domain">
    <text evidence="2">The N-terminus interacts with host JAK1 and STAT1 (By similarity). The C-terminus interacts with host STAT2 (By similarity). The C-terminus also interacts with host PP1 (By similarity).</text>
</comment>
<comment type="RNA editing">
    <location>
        <position position="231" evidence="6"/>
    </location>
    <text>Partially edited. RNA editing at this position consists of an insertion of one guanine nucleotide. The sequence displayed here is the V protein, derived from the edited RNA. The unedited RNA gives rise to the P protein (AC P03422).</text>
</comment>
<comment type="similarity">
    <text evidence="8">Belongs to the paramyxoviruses V protein family.</text>
</comment>
<dbReference type="EMBL" id="AF266288">
    <property type="protein sequence ID" value="AAF85677.2"/>
    <property type="molecule type" value="Genomic_RNA"/>
</dbReference>
<dbReference type="PIR" id="A31490">
    <property type="entry name" value="A31490"/>
</dbReference>
<dbReference type="PIR" id="S20830">
    <property type="entry name" value="S20830"/>
</dbReference>
<dbReference type="SMR" id="Q9EMA9"/>
<dbReference type="IntAct" id="Q9EMA9">
    <property type="interactions" value="2"/>
</dbReference>
<dbReference type="Proteomes" id="UP000141942">
    <property type="component" value="Genome"/>
</dbReference>
<dbReference type="GO" id="GO:0030430">
    <property type="term" value="C:host cell cytoplasm"/>
    <property type="evidence" value="ECO:0007669"/>
    <property type="project" value="UniProtKB-SubCell"/>
</dbReference>
<dbReference type="GO" id="GO:0046872">
    <property type="term" value="F:metal ion binding"/>
    <property type="evidence" value="ECO:0007669"/>
    <property type="project" value="UniProtKB-KW"/>
</dbReference>
<dbReference type="GO" id="GO:0039557">
    <property type="term" value="P:symbiont-mediated suppression of host cytoplasmic pattern recognition receptor signaling pathway via inhibition of IRF7 activity"/>
    <property type="evidence" value="ECO:0007669"/>
    <property type="project" value="UniProtKB-KW"/>
</dbReference>
<dbReference type="GO" id="GO:0039554">
    <property type="term" value="P:symbiont-mediated suppression of host cytoplasmic pattern recognition receptor signaling pathway via inhibition of MDA-5 activity"/>
    <property type="evidence" value="ECO:0007669"/>
    <property type="project" value="UniProtKB-KW"/>
</dbReference>
<dbReference type="GO" id="GO:0039540">
    <property type="term" value="P:symbiont-mediated suppression of host cytoplasmic pattern recognition receptor signaling pathway via inhibition of RIG-I activity"/>
    <property type="evidence" value="ECO:0000314"/>
    <property type="project" value="UniProtKB"/>
</dbReference>
<dbReference type="GO" id="GO:0039574">
    <property type="term" value="P:symbiont-mediated suppression of host JAK-STAT cascade via inhibition of host TYK2 activity"/>
    <property type="evidence" value="ECO:0007669"/>
    <property type="project" value="UniProtKB-KW"/>
</dbReference>
<dbReference type="GO" id="GO:0039563">
    <property type="term" value="P:symbiont-mediated suppression of host JAK-STAT cascade via inhibition of STAT1 activity"/>
    <property type="evidence" value="ECO:0007669"/>
    <property type="project" value="UniProtKB-KW"/>
</dbReference>
<dbReference type="GO" id="GO:0039564">
    <property type="term" value="P:symbiont-mediated suppression of host JAK-STAT cascade via inhibition of STAT2 activity"/>
    <property type="evidence" value="ECO:0007669"/>
    <property type="project" value="UniProtKB-KW"/>
</dbReference>
<dbReference type="GO" id="GO:0039502">
    <property type="term" value="P:symbiont-mediated suppression of host type I interferon-mediated signaling pathway"/>
    <property type="evidence" value="ECO:0000314"/>
    <property type="project" value="UniProtKB"/>
</dbReference>
<dbReference type="Gene3D" id="4.10.80.340">
    <property type="match status" value="1"/>
</dbReference>
<dbReference type="InterPro" id="IPR024279">
    <property type="entry name" value="Paramyx_V_Zn-bd"/>
</dbReference>
<dbReference type="InterPro" id="IPR028243">
    <property type="entry name" value="Paramyxo_P/V_N"/>
</dbReference>
<dbReference type="Pfam" id="PF13825">
    <property type="entry name" value="Paramyxo_P_V_N"/>
    <property type="match status" value="1"/>
</dbReference>
<dbReference type="Pfam" id="PF13008">
    <property type="entry name" value="zf-Paramyx-P"/>
    <property type="match status" value="1"/>
</dbReference>
<name>V_MEASE</name>
<accession>Q9EMA9</accession>
<organism>
    <name type="scientific">Measles virus (strain Edmonston)</name>
    <name type="common">MeV</name>
    <name type="synonym">Subacute sclerose panencephalitis virus</name>
    <dbReference type="NCBI Taxonomy" id="11235"/>
    <lineage>
        <taxon>Viruses</taxon>
        <taxon>Riboviria</taxon>
        <taxon>Orthornavirae</taxon>
        <taxon>Negarnaviricota</taxon>
        <taxon>Haploviricotina</taxon>
        <taxon>Monjiviricetes</taxon>
        <taxon>Mononegavirales</taxon>
        <taxon>Paramyxoviridae</taxon>
        <taxon>Orthoparamyxovirinae</taxon>
        <taxon>Morbillivirus</taxon>
        <taxon>Morbillivirus hominis</taxon>
        <taxon>Measles morbillivirus</taxon>
    </lineage>
</organism>
<keyword id="KW-1035">Host cytoplasm</keyword>
<keyword id="KW-0945">Host-virus interaction</keyword>
<keyword id="KW-1090">Inhibition of host innate immune response by virus</keyword>
<keyword id="KW-1114">Inhibition of host interferon signaling pathway by virus</keyword>
<keyword id="KW-1093">Inhibition of host IRF7 by virus</keyword>
<keyword id="KW-1089">Inhibition of host MDA5 by virus</keyword>
<keyword id="KW-1113">Inhibition of host RLR pathway by virus</keyword>
<keyword id="KW-1105">Inhibition of host STAT1 by virus</keyword>
<keyword id="KW-1106">Inhibition of host STAT2 by virus</keyword>
<keyword id="KW-1112">Inhibition of host TYK2 by virus</keyword>
<keyword id="KW-0922">Interferon antiviral system evasion</keyword>
<keyword id="KW-0479">Metal-binding</keyword>
<keyword id="KW-0691">RNA editing</keyword>
<keyword id="KW-0899">Viral immunoevasion</keyword>
<keyword id="KW-0862">Zinc</keyword>
<organismHost>
    <name type="scientific">Homo sapiens</name>
    <name type="common">Human</name>
    <dbReference type="NCBI Taxonomy" id="9606"/>
</organismHost>
<protein>
    <recommendedName>
        <fullName>Non-structural protein V</fullName>
    </recommendedName>
</protein>
<sequence length="299" mass="32146">MAEEQARHVKNGLECIRALKAEPIGSLAIEEAMAAWSEISDNPGQERATCREEKAGSSGLSKPCLSAIGSTEGGAPRIRGQGPGESDDDAETLGIPPRNLQASSTGLQCYYVYDHSGEAVKGIQDADSIMVQSGLDGDSTLSGGDNESENSDVDIGEPDTEGYAITDRGSAPISMGFRASDVETAEGGEIHELLRLQSRGNNFPKLGKTLNVPPPPDPGRASTSETPIKKGHRREISLIWNGDRVFIDRWCNPMCSKVTLGTIRARCTCGECPRVCEQCRTDTGVDTRIWYHNLPEIPE</sequence>
<reference key="1">
    <citation type="journal article" date="2001" name="J. Virol.">
        <title>Comparison of predicted amino acid sequences of measles virus strains in the Edmonston vaccine lineage.</title>
        <authorList>
            <person name="Parks C.L."/>
            <person name="Lerch R.A."/>
            <person name="Walpita P."/>
            <person name="Wang H.P."/>
            <person name="Sidhu M.S."/>
            <person name="Udem S.A."/>
        </authorList>
    </citation>
    <scope>NUCLEOTIDE SEQUENCE [GENOMIC RNA]</scope>
</reference>
<reference key="2">
    <citation type="journal article" date="1989" name="Cell">
        <title>Measles virus editing provides an additional cysteine-rich protein.</title>
        <authorList>
            <person name="Cattaneo R."/>
            <person name="Kaelin K."/>
            <person name="Baczko K."/>
            <person name="Billeter M.A."/>
        </authorList>
    </citation>
    <scope>RNA EDITING</scope>
</reference>
<reference key="3">
    <citation type="journal article" date="2018" name="J. Virol.">
        <title>Paramyxovirus V Proteins Interact with the RIG-I/TRIM25 Regulatory Complex and Inhibit RIG-I Signaling.</title>
        <authorList>
            <person name="Sanchez-Aparicio M.T."/>
            <person name="Feinman L.J."/>
            <person name="Garcia-Sastre A."/>
            <person name="Shaw M.L."/>
        </authorList>
    </citation>
    <scope>FUNCTION</scope>
    <scope>INTERACTION WITH HOST TRIM25</scope>
    <scope>INTERACTION WITH HOST RIGI</scope>
</reference>